<dbReference type="EC" id="2.7.11.33" evidence="1"/>
<dbReference type="EC" id="2.7.4.28" evidence="1"/>
<dbReference type="EMBL" id="CP001050">
    <property type="protein sequence ID" value="ACF29026.1"/>
    <property type="molecule type" value="Genomic_DNA"/>
</dbReference>
<dbReference type="RefSeq" id="WP_003687512.1">
    <property type="nucleotide sequence ID" value="NC_011035.1"/>
</dbReference>
<dbReference type="SMR" id="B4RJM3"/>
<dbReference type="KEGG" id="ngk:NGK_0333"/>
<dbReference type="HOGENOM" id="CLU_046206_1_0_4"/>
<dbReference type="Proteomes" id="UP000002564">
    <property type="component" value="Chromosome"/>
</dbReference>
<dbReference type="GO" id="GO:0043531">
    <property type="term" value="F:ADP binding"/>
    <property type="evidence" value="ECO:0007669"/>
    <property type="project" value="UniProtKB-UniRule"/>
</dbReference>
<dbReference type="GO" id="GO:0005524">
    <property type="term" value="F:ATP binding"/>
    <property type="evidence" value="ECO:0007669"/>
    <property type="project" value="InterPro"/>
</dbReference>
<dbReference type="GO" id="GO:0016776">
    <property type="term" value="F:phosphotransferase activity, phosphate group as acceptor"/>
    <property type="evidence" value="ECO:0007669"/>
    <property type="project" value="UniProtKB-UniRule"/>
</dbReference>
<dbReference type="GO" id="GO:0004674">
    <property type="term" value="F:protein serine/threonine kinase activity"/>
    <property type="evidence" value="ECO:0007669"/>
    <property type="project" value="UniProtKB-UniRule"/>
</dbReference>
<dbReference type="HAMAP" id="MF_01062">
    <property type="entry name" value="PSRP"/>
    <property type="match status" value="1"/>
</dbReference>
<dbReference type="InterPro" id="IPR005177">
    <property type="entry name" value="Kinase-pyrophosphorylase"/>
</dbReference>
<dbReference type="InterPro" id="IPR026530">
    <property type="entry name" value="PSRP"/>
</dbReference>
<dbReference type="NCBIfam" id="NF003742">
    <property type="entry name" value="PRK05339.1"/>
    <property type="match status" value="1"/>
</dbReference>
<dbReference type="PANTHER" id="PTHR31756">
    <property type="entry name" value="PYRUVATE, PHOSPHATE DIKINASE REGULATORY PROTEIN 1, CHLOROPLASTIC"/>
    <property type="match status" value="1"/>
</dbReference>
<dbReference type="PANTHER" id="PTHR31756:SF3">
    <property type="entry name" value="PYRUVATE, PHOSPHATE DIKINASE REGULATORY PROTEIN 1, CHLOROPLASTIC"/>
    <property type="match status" value="1"/>
</dbReference>
<dbReference type="Pfam" id="PF03618">
    <property type="entry name" value="Kinase-PPPase"/>
    <property type="match status" value="1"/>
</dbReference>
<sequence length="273" mass="30883">MSSPRQVFYISDRTGLTAENIGEALLNQFGNLSFKRHTHPFVDTPEKARAVVEKVNRSRQENGQRPIAFVSVVDDEIRRIIKGADAFQINFFETFLGLLEKELNTEATVSGQGHHSIGNTKRYDARMEAVNFSLNHDDGVSDKNLQEADVILMGVSRSGKTPTCLYLALQYGIRAANYPLIPDDLESADLPRMVKPYKDKLFGLTIQPERLQAIRQERRPNSAYARIDTCRSEVADAQSMFRRHGIPFANTTDKSVEELAVHILQACKLKRRF</sequence>
<accession>B4RJM3</accession>
<protein>
    <recommendedName>
        <fullName evidence="1">Putative phosphoenolpyruvate synthase regulatory protein</fullName>
        <shortName evidence="1">PEP synthase regulatory protein</shortName>
        <shortName evidence="1">PSRP</shortName>
        <ecNumber evidence="1">2.7.11.33</ecNumber>
        <ecNumber evidence="1">2.7.4.28</ecNumber>
    </recommendedName>
    <alternativeName>
        <fullName evidence="1">Pyruvate, water dikinase regulatory protein</fullName>
    </alternativeName>
</protein>
<feature type="chain" id="PRO_1000136482" description="Putative phosphoenolpyruvate synthase regulatory protein">
    <location>
        <begin position="1"/>
        <end position="273"/>
    </location>
</feature>
<feature type="binding site" evidence="1">
    <location>
        <begin position="154"/>
        <end position="161"/>
    </location>
    <ligand>
        <name>ADP</name>
        <dbReference type="ChEBI" id="CHEBI:456216"/>
    </ligand>
</feature>
<evidence type="ECO:0000255" key="1">
    <source>
        <dbReference type="HAMAP-Rule" id="MF_01062"/>
    </source>
</evidence>
<keyword id="KW-0418">Kinase</keyword>
<keyword id="KW-0547">Nucleotide-binding</keyword>
<keyword id="KW-0723">Serine/threonine-protein kinase</keyword>
<keyword id="KW-0808">Transferase</keyword>
<proteinExistence type="inferred from homology"/>
<name>PSRP_NEIG2</name>
<gene>
    <name type="ordered locus">NGK_0333</name>
</gene>
<reference key="1">
    <citation type="journal article" date="2008" name="J. Bacteriol.">
        <title>Complete genome sequence of Neisseria gonorrhoeae NCCP11945.</title>
        <authorList>
            <person name="Chung G.T."/>
            <person name="Yoo J.S."/>
            <person name="Oh H.B."/>
            <person name="Lee Y.S."/>
            <person name="Cha S.H."/>
            <person name="Kim S.J."/>
            <person name="Yoo C.K."/>
        </authorList>
    </citation>
    <scope>NUCLEOTIDE SEQUENCE [LARGE SCALE GENOMIC DNA]</scope>
    <source>
        <strain>NCCP11945</strain>
    </source>
</reference>
<organism>
    <name type="scientific">Neisseria gonorrhoeae (strain NCCP11945)</name>
    <dbReference type="NCBI Taxonomy" id="521006"/>
    <lineage>
        <taxon>Bacteria</taxon>
        <taxon>Pseudomonadati</taxon>
        <taxon>Pseudomonadota</taxon>
        <taxon>Betaproteobacteria</taxon>
        <taxon>Neisseriales</taxon>
        <taxon>Neisseriaceae</taxon>
        <taxon>Neisseria</taxon>
    </lineage>
</organism>
<comment type="function">
    <text evidence="1">Bifunctional serine/threonine kinase and phosphorylase involved in the regulation of the phosphoenolpyruvate synthase (PEPS) by catalyzing its phosphorylation/dephosphorylation.</text>
</comment>
<comment type="catalytic activity">
    <reaction evidence="1">
        <text>[pyruvate, water dikinase] + ADP = [pyruvate, water dikinase]-phosphate + AMP + H(+)</text>
        <dbReference type="Rhea" id="RHEA:46020"/>
        <dbReference type="Rhea" id="RHEA-COMP:11425"/>
        <dbReference type="Rhea" id="RHEA-COMP:11426"/>
        <dbReference type="ChEBI" id="CHEBI:15378"/>
        <dbReference type="ChEBI" id="CHEBI:43176"/>
        <dbReference type="ChEBI" id="CHEBI:68546"/>
        <dbReference type="ChEBI" id="CHEBI:456215"/>
        <dbReference type="ChEBI" id="CHEBI:456216"/>
        <dbReference type="EC" id="2.7.11.33"/>
    </reaction>
</comment>
<comment type="catalytic activity">
    <reaction evidence="1">
        <text>[pyruvate, water dikinase]-phosphate + phosphate + H(+) = [pyruvate, water dikinase] + diphosphate</text>
        <dbReference type="Rhea" id="RHEA:48580"/>
        <dbReference type="Rhea" id="RHEA-COMP:11425"/>
        <dbReference type="Rhea" id="RHEA-COMP:11426"/>
        <dbReference type="ChEBI" id="CHEBI:15378"/>
        <dbReference type="ChEBI" id="CHEBI:33019"/>
        <dbReference type="ChEBI" id="CHEBI:43176"/>
        <dbReference type="ChEBI" id="CHEBI:43474"/>
        <dbReference type="ChEBI" id="CHEBI:68546"/>
        <dbReference type="EC" id="2.7.4.28"/>
    </reaction>
</comment>
<comment type="similarity">
    <text evidence="1">Belongs to the pyruvate, phosphate/water dikinase regulatory protein family. PSRP subfamily.</text>
</comment>